<dbReference type="EC" id="2.7.7.40" evidence="1"/>
<dbReference type="EMBL" id="BX571856">
    <property type="protein sequence ID" value="CAG39272.1"/>
    <property type="molecule type" value="Genomic_DNA"/>
</dbReference>
<dbReference type="RefSeq" id="WP_000638469.1">
    <property type="nucleotide sequence ID" value="NC_002952.2"/>
</dbReference>
<dbReference type="SMR" id="Q6GK63"/>
<dbReference type="KEGG" id="sar:SAR0246"/>
<dbReference type="HOGENOM" id="CLU_061281_2_3_9"/>
<dbReference type="UniPathway" id="UPA00790"/>
<dbReference type="Proteomes" id="UP000000596">
    <property type="component" value="Chromosome"/>
</dbReference>
<dbReference type="GO" id="GO:0050518">
    <property type="term" value="F:2-C-methyl-D-erythritol 4-phosphate cytidylyltransferase activity"/>
    <property type="evidence" value="ECO:0007669"/>
    <property type="project" value="TreeGrafter"/>
</dbReference>
<dbReference type="GO" id="GO:0047349">
    <property type="term" value="F:D-ribitol-5-phosphate cytidylyltransferase activity"/>
    <property type="evidence" value="ECO:0007669"/>
    <property type="project" value="UniProtKB-UniRule"/>
</dbReference>
<dbReference type="GO" id="GO:0071555">
    <property type="term" value="P:cell wall organization"/>
    <property type="evidence" value="ECO:0007669"/>
    <property type="project" value="UniProtKB-KW"/>
</dbReference>
<dbReference type="GO" id="GO:0008299">
    <property type="term" value="P:isoprenoid biosynthetic process"/>
    <property type="evidence" value="ECO:0007669"/>
    <property type="project" value="InterPro"/>
</dbReference>
<dbReference type="GO" id="GO:1902012">
    <property type="term" value="P:poly(ribitol phosphate) teichoic acid biosynthetic process"/>
    <property type="evidence" value="ECO:0007669"/>
    <property type="project" value="UniProtKB-UniRule"/>
</dbReference>
<dbReference type="CDD" id="cd02516">
    <property type="entry name" value="CDP-ME_synthetase"/>
    <property type="match status" value="1"/>
</dbReference>
<dbReference type="FunFam" id="3.90.550.10:FF:000003">
    <property type="entry name" value="2-C-methyl-D-erythritol 4-phosphate cytidylyltransferase"/>
    <property type="match status" value="1"/>
</dbReference>
<dbReference type="Gene3D" id="3.90.550.10">
    <property type="entry name" value="Spore Coat Polysaccharide Biosynthesis Protein SpsA, Chain A"/>
    <property type="match status" value="1"/>
</dbReference>
<dbReference type="HAMAP" id="MF_02068">
    <property type="entry name" value="TarI"/>
    <property type="match status" value="1"/>
</dbReference>
<dbReference type="InterPro" id="IPR034683">
    <property type="entry name" value="IspD/TarI"/>
</dbReference>
<dbReference type="InterPro" id="IPR050088">
    <property type="entry name" value="IspD/TarI_cytidylyltransf_bact"/>
</dbReference>
<dbReference type="InterPro" id="IPR018294">
    <property type="entry name" value="ISPD_synthase_CS"/>
</dbReference>
<dbReference type="InterPro" id="IPR029044">
    <property type="entry name" value="Nucleotide-diphossugar_trans"/>
</dbReference>
<dbReference type="InterPro" id="IPR034709">
    <property type="entry name" value="TarI"/>
</dbReference>
<dbReference type="NCBIfam" id="NF001183">
    <property type="entry name" value="PRK00155.1-3"/>
    <property type="match status" value="1"/>
</dbReference>
<dbReference type="NCBIfam" id="NF009924">
    <property type="entry name" value="PRK13385.1"/>
    <property type="match status" value="1"/>
</dbReference>
<dbReference type="PANTHER" id="PTHR32125">
    <property type="entry name" value="2-C-METHYL-D-ERYTHRITOL 4-PHOSPHATE CYTIDYLYLTRANSFERASE, CHLOROPLASTIC"/>
    <property type="match status" value="1"/>
</dbReference>
<dbReference type="PANTHER" id="PTHR32125:SF8">
    <property type="entry name" value="RIBITOL-5-PHOSPHATE CYTIDYLYLTRANSFERASE"/>
    <property type="match status" value="1"/>
</dbReference>
<dbReference type="Pfam" id="PF01128">
    <property type="entry name" value="IspD"/>
    <property type="match status" value="1"/>
</dbReference>
<dbReference type="SUPFAM" id="SSF53448">
    <property type="entry name" value="Nucleotide-diphospho-sugar transferases"/>
    <property type="match status" value="1"/>
</dbReference>
<dbReference type="PROSITE" id="PS01295">
    <property type="entry name" value="ISPD"/>
    <property type="match status" value="1"/>
</dbReference>
<feature type="chain" id="PRO_0000075619" description="Ribitol-5-phosphate cytidylyltransferase 2">
    <location>
        <begin position="1"/>
        <end position="238"/>
    </location>
</feature>
<feature type="binding site" evidence="1">
    <location>
        <begin position="7"/>
        <end position="10"/>
    </location>
    <ligand>
        <name>CTP</name>
        <dbReference type="ChEBI" id="CHEBI:37563"/>
    </ligand>
</feature>
<feature type="binding site" evidence="1">
    <location>
        <begin position="81"/>
        <end position="87"/>
    </location>
    <ligand>
        <name>CTP</name>
        <dbReference type="ChEBI" id="CHEBI:37563"/>
    </ligand>
</feature>
<feature type="site" description="Transition state stabilizer" evidence="1">
    <location>
        <position position="14"/>
    </location>
</feature>
<feature type="site" description="Transition state stabilizer" evidence="1">
    <location>
        <position position="22"/>
    </location>
</feature>
<feature type="site" description="Positions ribitol 5-phosphate for the nucleophilic attack" evidence="1">
    <location>
        <position position="160"/>
    </location>
</feature>
<feature type="site" description="Positions ribitol 5-phosphate for the nucleophilic attack" evidence="1">
    <location>
        <position position="217"/>
    </location>
</feature>
<reference key="1">
    <citation type="journal article" date="2004" name="Proc. Natl. Acad. Sci. U.S.A.">
        <title>Complete genomes of two clinical Staphylococcus aureus strains: evidence for the rapid evolution of virulence and drug resistance.</title>
        <authorList>
            <person name="Holden M.T.G."/>
            <person name="Feil E.J."/>
            <person name="Lindsay J.A."/>
            <person name="Peacock S.J."/>
            <person name="Day N.P.J."/>
            <person name="Enright M.C."/>
            <person name="Foster T.J."/>
            <person name="Moore C.E."/>
            <person name="Hurst L."/>
            <person name="Atkin R."/>
            <person name="Barron A."/>
            <person name="Bason N."/>
            <person name="Bentley S.D."/>
            <person name="Chillingworth C."/>
            <person name="Chillingworth T."/>
            <person name="Churcher C."/>
            <person name="Clark L."/>
            <person name="Corton C."/>
            <person name="Cronin A."/>
            <person name="Doggett J."/>
            <person name="Dowd L."/>
            <person name="Feltwell T."/>
            <person name="Hance Z."/>
            <person name="Harris B."/>
            <person name="Hauser H."/>
            <person name="Holroyd S."/>
            <person name="Jagels K."/>
            <person name="James K.D."/>
            <person name="Lennard N."/>
            <person name="Line A."/>
            <person name="Mayes R."/>
            <person name="Moule S."/>
            <person name="Mungall K."/>
            <person name="Ormond D."/>
            <person name="Quail M.A."/>
            <person name="Rabbinowitsch E."/>
            <person name="Rutherford K.M."/>
            <person name="Sanders M."/>
            <person name="Sharp S."/>
            <person name="Simmonds M."/>
            <person name="Stevens K."/>
            <person name="Whitehead S."/>
            <person name="Barrell B.G."/>
            <person name="Spratt B.G."/>
            <person name="Parkhill J."/>
        </authorList>
    </citation>
    <scope>NUCLEOTIDE SEQUENCE [LARGE SCALE GENOMIC DNA]</scope>
    <source>
        <strain>MRSA252</strain>
    </source>
</reference>
<sequence length="238" mass="26534">MIYAGILAGGIGSRMGNVPLPKQFLDIDNKPILIHTIEKFILVSEFNEIIIATPAQWISHTQDILKKYNITDQRVKVVAGGTDRNETIMNIIDHIRNTQGINDDDVIVTHDAVRPFLTQRIIKENIEVAAKYGAVDTVIEAIDTIVMSKDKQNIHSIPVRNEMYQGQTPQSFNIKLLQDSYRALSSAQKEILSDACKIIVESGHAVKLVRGELYNIKVTTPYDLKVANAIIQGDIADD</sequence>
<proteinExistence type="inferred from homology"/>
<comment type="function">
    <text evidence="1">Catalyzes the transfer of the cytidylyl group of CTP to D-ribitol 5-phosphate.</text>
</comment>
<comment type="catalytic activity">
    <reaction evidence="1">
        <text>D-ribitol 5-phosphate + CTP + H(+) = CDP-L-ribitol + diphosphate</text>
        <dbReference type="Rhea" id="RHEA:12456"/>
        <dbReference type="ChEBI" id="CHEBI:15378"/>
        <dbReference type="ChEBI" id="CHEBI:33019"/>
        <dbReference type="ChEBI" id="CHEBI:37563"/>
        <dbReference type="ChEBI" id="CHEBI:57608"/>
        <dbReference type="ChEBI" id="CHEBI:57695"/>
        <dbReference type="EC" id="2.7.7.40"/>
    </reaction>
</comment>
<comment type="pathway">
    <text evidence="1">Cell wall biogenesis; poly(ribitol phosphate) teichoic acid biosynthesis.</text>
</comment>
<comment type="similarity">
    <text evidence="1">Belongs to the IspD/TarI cytidylyltransferase family. TarI subfamily.</text>
</comment>
<protein>
    <recommendedName>
        <fullName evidence="1">Ribitol-5-phosphate cytidylyltransferase 2</fullName>
        <ecNumber evidence="1">2.7.7.40</ecNumber>
    </recommendedName>
</protein>
<accession>Q6GK63</accession>
<gene>
    <name evidence="1" type="primary">tarI2</name>
    <name type="ordered locus">SAR0246</name>
</gene>
<evidence type="ECO:0000255" key="1">
    <source>
        <dbReference type="HAMAP-Rule" id="MF_02068"/>
    </source>
</evidence>
<name>TARI2_STAAR</name>
<organism>
    <name type="scientific">Staphylococcus aureus (strain MRSA252)</name>
    <dbReference type="NCBI Taxonomy" id="282458"/>
    <lineage>
        <taxon>Bacteria</taxon>
        <taxon>Bacillati</taxon>
        <taxon>Bacillota</taxon>
        <taxon>Bacilli</taxon>
        <taxon>Bacillales</taxon>
        <taxon>Staphylococcaceae</taxon>
        <taxon>Staphylococcus</taxon>
    </lineage>
</organism>
<keyword id="KW-0961">Cell wall biogenesis/degradation</keyword>
<keyword id="KW-0548">Nucleotidyltransferase</keyword>
<keyword id="KW-0777">Teichoic acid biosynthesis</keyword>
<keyword id="KW-0808">Transferase</keyword>